<accession>B1XSP8</accession>
<organism>
    <name type="scientific">Polynucleobacter necessarius subsp. necessarius (strain STIR1)</name>
    <dbReference type="NCBI Taxonomy" id="452638"/>
    <lineage>
        <taxon>Bacteria</taxon>
        <taxon>Pseudomonadati</taxon>
        <taxon>Pseudomonadota</taxon>
        <taxon>Betaproteobacteria</taxon>
        <taxon>Burkholderiales</taxon>
        <taxon>Burkholderiaceae</taxon>
        <taxon>Polynucleobacter</taxon>
    </lineage>
</organism>
<protein>
    <recommendedName>
        <fullName evidence="1">Elongation factor G</fullName>
        <shortName evidence="1">EF-G</shortName>
    </recommendedName>
</protein>
<feature type="chain" id="PRO_1000091746" description="Elongation factor G">
    <location>
        <begin position="1"/>
        <end position="700"/>
    </location>
</feature>
<feature type="domain" description="tr-type G">
    <location>
        <begin position="8"/>
        <end position="290"/>
    </location>
</feature>
<feature type="binding site" evidence="1">
    <location>
        <begin position="17"/>
        <end position="24"/>
    </location>
    <ligand>
        <name>GTP</name>
        <dbReference type="ChEBI" id="CHEBI:37565"/>
    </ligand>
</feature>
<feature type="binding site" evidence="1">
    <location>
        <begin position="88"/>
        <end position="92"/>
    </location>
    <ligand>
        <name>GTP</name>
        <dbReference type="ChEBI" id="CHEBI:37565"/>
    </ligand>
</feature>
<feature type="binding site" evidence="1">
    <location>
        <begin position="142"/>
        <end position="145"/>
    </location>
    <ligand>
        <name>GTP</name>
        <dbReference type="ChEBI" id="CHEBI:37565"/>
    </ligand>
</feature>
<evidence type="ECO:0000255" key="1">
    <source>
        <dbReference type="HAMAP-Rule" id="MF_00054"/>
    </source>
</evidence>
<comment type="function">
    <text evidence="1">Catalyzes the GTP-dependent ribosomal translocation step during translation elongation. During this step, the ribosome changes from the pre-translocational (PRE) to the post-translocational (POST) state as the newly formed A-site-bound peptidyl-tRNA and P-site-bound deacylated tRNA move to the P and E sites, respectively. Catalyzes the coordinated movement of the two tRNA molecules, the mRNA and conformational changes in the ribosome.</text>
</comment>
<comment type="subcellular location">
    <subcellularLocation>
        <location evidence="1">Cytoplasm</location>
    </subcellularLocation>
</comment>
<comment type="similarity">
    <text evidence="1">Belongs to the TRAFAC class translation factor GTPase superfamily. Classic translation factor GTPase family. EF-G/EF-2 subfamily.</text>
</comment>
<proteinExistence type="inferred from homology"/>
<reference key="1">
    <citation type="journal article" date="2013" name="Proc. Natl. Acad. Sci. U.S.A.">
        <title>Polynucleobacter necessarius, a model for genome reduction in both free-living and symbiotic bacteria.</title>
        <authorList>
            <person name="Boscaro V."/>
            <person name="Felletti M."/>
            <person name="Vannini C."/>
            <person name="Ackerman M.S."/>
            <person name="Chain P.S."/>
            <person name="Malfatti S."/>
            <person name="Vergez L.M."/>
            <person name="Shin M."/>
            <person name="Doak T.G."/>
            <person name="Lynch M."/>
            <person name="Petroni G."/>
        </authorList>
    </citation>
    <scope>NUCLEOTIDE SEQUENCE [LARGE SCALE GENOMIC DNA]</scope>
    <source>
        <strain>STIR1</strain>
    </source>
</reference>
<gene>
    <name evidence="1" type="primary">fusA</name>
    <name type="ordered locus">Pnec_0047</name>
</gene>
<dbReference type="EMBL" id="CP001010">
    <property type="protein sequence ID" value="ACB43375.1"/>
    <property type="molecule type" value="Genomic_DNA"/>
</dbReference>
<dbReference type="SMR" id="B1XSP8"/>
<dbReference type="STRING" id="452638.Pnec_0047"/>
<dbReference type="KEGG" id="pne:Pnec_0047"/>
<dbReference type="eggNOG" id="COG0480">
    <property type="taxonomic scope" value="Bacteria"/>
</dbReference>
<dbReference type="HOGENOM" id="CLU_002794_4_1_4"/>
<dbReference type="OrthoDB" id="9804431at2"/>
<dbReference type="GO" id="GO:0005737">
    <property type="term" value="C:cytoplasm"/>
    <property type="evidence" value="ECO:0007669"/>
    <property type="project" value="UniProtKB-SubCell"/>
</dbReference>
<dbReference type="GO" id="GO:0005525">
    <property type="term" value="F:GTP binding"/>
    <property type="evidence" value="ECO:0007669"/>
    <property type="project" value="UniProtKB-UniRule"/>
</dbReference>
<dbReference type="GO" id="GO:0003924">
    <property type="term" value="F:GTPase activity"/>
    <property type="evidence" value="ECO:0007669"/>
    <property type="project" value="InterPro"/>
</dbReference>
<dbReference type="GO" id="GO:0097216">
    <property type="term" value="F:guanosine tetraphosphate binding"/>
    <property type="evidence" value="ECO:0007669"/>
    <property type="project" value="UniProtKB-ARBA"/>
</dbReference>
<dbReference type="GO" id="GO:0003746">
    <property type="term" value="F:translation elongation factor activity"/>
    <property type="evidence" value="ECO:0007669"/>
    <property type="project" value="UniProtKB-UniRule"/>
</dbReference>
<dbReference type="GO" id="GO:0032790">
    <property type="term" value="P:ribosome disassembly"/>
    <property type="evidence" value="ECO:0007669"/>
    <property type="project" value="TreeGrafter"/>
</dbReference>
<dbReference type="CDD" id="cd01886">
    <property type="entry name" value="EF-G"/>
    <property type="match status" value="1"/>
</dbReference>
<dbReference type="CDD" id="cd16262">
    <property type="entry name" value="EFG_III"/>
    <property type="match status" value="1"/>
</dbReference>
<dbReference type="CDD" id="cd01434">
    <property type="entry name" value="EFG_mtEFG1_IV"/>
    <property type="match status" value="1"/>
</dbReference>
<dbReference type="CDD" id="cd03713">
    <property type="entry name" value="EFG_mtEFG_C"/>
    <property type="match status" value="1"/>
</dbReference>
<dbReference type="CDD" id="cd04088">
    <property type="entry name" value="EFG_mtEFG_II"/>
    <property type="match status" value="1"/>
</dbReference>
<dbReference type="FunFam" id="2.40.30.10:FF:000006">
    <property type="entry name" value="Elongation factor G"/>
    <property type="match status" value="1"/>
</dbReference>
<dbReference type="FunFam" id="3.30.230.10:FF:000003">
    <property type="entry name" value="Elongation factor G"/>
    <property type="match status" value="1"/>
</dbReference>
<dbReference type="FunFam" id="3.30.70.240:FF:000001">
    <property type="entry name" value="Elongation factor G"/>
    <property type="match status" value="1"/>
</dbReference>
<dbReference type="FunFam" id="3.30.70.870:FF:000001">
    <property type="entry name" value="Elongation factor G"/>
    <property type="match status" value="1"/>
</dbReference>
<dbReference type="FunFam" id="3.40.50.300:FF:000029">
    <property type="entry name" value="Elongation factor G"/>
    <property type="match status" value="1"/>
</dbReference>
<dbReference type="Gene3D" id="3.30.230.10">
    <property type="match status" value="1"/>
</dbReference>
<dbReference type="Gene3D" id="3.30.70.240">
    <property type="match status" value="1"/>
</dbReference>
<dbReference type="Gene3D" id="3.30.70.870">
    <property type="entry name" value="Elongation Factor G (Translational Gtpase), domain 3"/>
    <property type="match status" value="1"/>
</dbReference>
<dbReference type="Gene3D" id="3.40.50.300">
    <property type="entry name" value="P-loop containing nucleotide triphosphate hydrolases"/>
    <property type="match status" value="1"/>
</dbReference>
<dbReference type="Gene3D" id="2.40.30.10">
    <property type="entry name" value="Translation factors"/>
    <property type="match status" value="1"/>
</dbReference>
<dbReference type="HAMAP" id="MF_00054_B">
    <property type="entry name" value="EF_G_EF_2_B"/>
    <property type="match status" value="1"/>
</dbReference>
<dbReference type="InterPro" id="IPR041095">
    <property type="entry name" value="EFG_II"/>
</dbReference>
<dbReference type="InterPro" id="IPR009022">
    <property type="entry name" value="EFG_III"/>
</dbReference>
<dbReference type="InterPro" id="IPR035647">
    <property type="entry name" value="EFG_III/V"/>
</dbReference>
<dbReference type="InterPro" id="IPR047872">
    <property type="entry name" value="EFG_IV"/>
</dbReference>
<dbReference type="InterPro" id="IPR035649">
    <property type="entry name" value="EFG_V"/>
</dbReference>
<dbReference type="InterPro" id="IPR000640">
    <property type="entry name" value="EFG_V-like"/>
</dbReference>
<dbReference type="InterPro" id="IPR004161">
    <property type="entry name" value="EFTu-like_2"/>
</dbReference>
<dbReference type="InterPro" id="IPR031157">
    <property type="entry name" value="G_TR_CS"/>
</dbReference>
<dbReference type="InterPro" id="IPR027417">
    <property type="entry name" value="P-loop_NTPase"/>
</dbReference>
<dbReference type="InterPro" id="IPR020568">
    <property type="entry name" value="Ribosomal_Su5_D2-typ_SF"/>
</dbReference>
<dbReference type="InterPro" id="IPR014721">
    <property type="entry name" value="Ribsml_uS5_D2-typ_fold_subgr"/>
</dbReference>
<dbReference type="InterPro" id="IPR005225">
    <property type="entry name" value="Small_GTP-bd"/>
</dbReference>
<dbReference type="InterPro" id="IPR000795">
    <property type="entry name" value="T_Tr_GTP-bd_dom"/>
</dbReference>
<dbReference type="InterPro" id="IPR009000">
    <property type="entry name" value="Transl_B-barrel_sf"/>
</dbReference>
<dbReference type="InterPro" id="IPR004540">
    <property type="entry name" value="Transl_elong_EFG/EF2"/>
</dbReference>
<dbReference type="InterPro" id="IPR005517">
    <property type="entry name" value="Transl_elong_EFG/EF2_IV"/>
</dbReference>
<dbReference type="NCBIfam" id="TIGR00484">
    <property type="entry name" value="EF-G"/>
    <property type="match status" value="1"/>
</dbReference>
<dbReference type="NCBIfam" id="NF009381">
    <property type="entry name" value="PRK12740.1-5"/>
    <property type="match status" value="1"/>
</dbReference>
<dbReference type="NCBIfam" id="TIGR00231">
    <property type="entry name" value="small_GTP"/>
    <property type="match status" value="1"/>
</dbReference>
<dbReference type="PANTHER" id="PTHR43261:SF1">
    <property type="entry name" value="RIBOSOME-RELEASING FACTOR 2, MITOCHONDRIAL"/>
    <property type="match status" value="1"/>
</dbReference>
<dbReference type="PANTHER" id="PTHR43261">
    <property type="entry name" value="TRANSLATION ELONGATION FACTOR G-RELATED"/>
    <property type="match status" value="1"/>
</dbReference>
<dbReference type="Pfam" id="PF00679">
    <property type="entry name" value="EFG_C"/>
    <property type="match status" value="1"/>
</dbReference>
<dbReference type="Pfam" id="PF14492">
    <property type="entry name" value="EFG_III"/>
    <property type="match status" value="1"/>
</dbReference>
<dbReference type="Pfam" id="PF03764">
    <property type="entry name" value="EFG_IV"/>
    <property type="match status" value="1"/>
</dbReference>
<dbReference type="Pfam" id="PF00009">
    <property type="entry name" value="GTP_EFTU"/>
    <property type="match status" value="1"/>
</dbReference>
<dbReference type="Pfam" id="PF03144">
    <property type="entry name" value="GTP_EFTU_D2"/>
    <property type="match status" value="1"/>
</dbReference>
<dbReference type="PRINTS" id="PR00315">
    <property type="entry name" value="ELONGATNFCT"/>
</dbReference>
<dbReference type="SMART" id="SM00838">
    <property type="entry name" value="EFG_C"/>
    <property type="match status" value="1"/>
</dbReference>
<dbReference type="SMART" id="SM00889">
    <property type="entry name" value="EFG_IV"/>
    <property type="match status" value="1"/>
</dbReference>
<dbReference type="SUPFAM" id="SSF54980">
    <property type="entry name" value="EF-G C-terminal domain-like"/>
    <property type="match status" value="2"/>
</dbReference>
<dbReference type="SUPFAM" id="SSF52540">
    <property type="entry name" value="P-loop containing nucleoside triphosphate hydrolases"/>
    <property type="match status" value="1"/>
</dbReference>
<dbReference type="SUPFAM" id="SSF54211">
    <property type="entry name" value="Ribosomal protein S5 domain 2-like"/>
    <property type="match status" value="1"/>
</dbReference>
<dbReference type="SUPFAM" id="SSF50447">
    <property type="entry name" value="Translation proteins"/>
    <property type="match status" value="1"/>
</dbReference>
<dbReference type="PROSITE" id="PS00301">
    <property type="entry name" value="G_TR_1"/>
    <property type="match status" value="1"/>
</dbReference>
<dbReference type="PROSITE" id="PS51722">
    <property type="entry name" value="G_TR_2"/>
    <property type="match status" value="1"/>
</dbReference>
<sequence>MARKTPIDKYRNIGISAHIDAGKTTTTERVLFYTGVNHKIGEVHDGAATMDWMEQEQERGITITSAATTTFWKGMAGNMPEHRINIIDTPGHVDFTIEVERSMRVLDGACMVYCAVGGVQPQSETVWRQANKYQVPRLAFVNKMDRTGANFFKVYEQMRTRLKANPILIQIPIGAEENFKGVVDLVKMKAVYWDEASQGTKFTYEDIPVELQASAEEWCEKMLEAAAESSEELMEKYLGGEGLTEEEIKKALRQRTIANEIVPMLCGTAFKNKGVQAMLDAVVELLPSPLDVPPVPCELEDGTPAVRKASDDEKFSALAFKIMTDPFVGQLIFFRVYSGVMKSGDTIYNPIKGKKERVGRLLQMHANEREEIKEVFAGDIAAAVGLKDATTGETLCDPDSIVVLERMVFPEPVISQAVEPKTKADQEKMGFALNRLAQEDPSFRVKTDEESGQTIISGMGELHLEILVDRMKREFGVEATVGKPQVAYRETIRKTCDEVEGKFVKQSGGRGQYGHVVLKLEPQAPGKGFEFVDAIKGGVVPREYIPAVEKGIIETLNSGVLAGYPVVDVKATLFFGSYHDVDSNENAFKMAGSMAFKDGMRKAAPVLLEPMMAVEVETPEDFMGNVMGDFSSRRGILQGMDDIPGGGKIVRAEVPLAEMFGYSTGLRSLTQGRATYTMEFKHYAEAPKNVAEAVMAAKAK</sequence>
<keyword id="KW-0963">Cytoplasm</keyword>
<keyword id="KW-0251">Elongation factor</keyword>
<keyword id="KW-0342">GTP-binding</keyword>
<keyword id="KW-0547">Nucleotide-binding</keyword>
<keyword id="KW-0648">Protein biosynthesis</keyword>
<name>EFG_POLNS</name>